<keyword id="KW-0025">Alternative splicing</keyword>
<keyword id="KW-0106">Calcium</keyword>
<keyword id="KW-0175">Coiled coil</keyword>
<keyword id="KW-0963">Cytoplasm</keyword>
<keyword id="KW-0221">Differentiation</keyword>
<keyword id="KW-0254">Endocytosis</keyword>
<keyword id="KW-0479">Metal-binding</keyword>
<keyword id="KW-0597">Phosphoprotein</keyword>
<keyword id="KW-1185">Reference proteome</keyword>
<keyword id="KW-0677">Repeat</keyword>
<keyword id="KW-0728">SH3 domain</keyword>
<feature type="chain" id="PRO_0000080962" description="Intersectin-2">
    <location>
        <begin position="1"/>
        <end position="1659"/>
    </location>
</feature>
<feature type="domain" description="EH 1" evidence="6">
    <location>
        <begin position="22"/>
        <end position="110"/>
    </location>
</feature>
<feature type="domain" description="EF-hand 1" evidence="9">
    <location>
        <begin position="54"/>
        <end position="89"/>
    </location>
</feature>
<feature type="domain" description="EH 2" evidence="6">
    <location>
        <begin position="245"/>
        <end position="334"/>
    </location>
</feature>
<feature type="domain" description="EF-hand 2" evidence="9">
    <location>
        <begin position="278"/>
        <end position="313"/>
    </location>
</feature>
<feature type="domain" description="SH3 1" evidence="8">
    <location>
        <begin position="718"/>
        <end position="779"/>
    </location>
</feature>
<feature type="domain" description="SH3 2" evidence="8">
    <location>
        <begin position="852"/>
        <end position="910"/>
    </location>
</feature>
<feature type="domain" description="SH3 3" evidence="8">
    <location>
        <begin position="942"/>
        <end position="1000"/>
    </location>
</feature>
<feature type="domain" description="SH3 4" evidence="8">
    <location>
        <begin position="1014"/>
        <end position="1078"/>
    </location>
</feature>
<feature type="domain" description="SH3 5" evidence="8">
    <location>
        <begin position="1088"/>
        <end position="1147"/>
    </location>
</feature>
<feature type="domain" description="DH" evidence="5">
    <location>
        <begin position="1170"/>
        <end position="1357"/>
    </location>
</feature>
<feature type="domain" description="PH" evidence="7">
    <location>
        <begin position="1396"/>
        <end position="1506"/>
    </location>
</feature>
<feature type="domain" description="C2" evidence="4">
    <location>
        <begin position="1514"/>
        <end position="1630"/>
    </location>
</feature>
<feature type="region of interest" description="Disordered" evidence="10">
    <location>
        <begin position="220"/>
        <end position="242"/>
    </location>
</feature>
<feature type="region of interest" description="Disordered" evidence="10">
    <location>
        <begin position="335"/>
        <end position="382"/>
    </location>
</feature>
<feature type="region of interest" description="Disordered" evidence="10">
    <location>
        <begin position="689"/>
        <end position="715"/>
    </location>
</feature>
<feature type="coiled-coil region" evidence="3">
    <location>
        <begin position="365"/>
        <end position="717"/>
    </location>
</feature>
<feature type="compositionally biased region" description="Low complexity" evidence="10">
    <location>
        <begin position="220"/>
        <end position="231"/>
    </location>
</feature>
<feature type="compositionally biased region" description="Polar residues" evidence="10">
    <location>
        <begin position="339"/>
        <end position="350"/>
    </location>
</feature>
<feature type="compositionally biased region" description="Basic and acidic residues" evidence="10">
    <location>
        <begin position="351"/>
        <end position="382"/>
    </location>
</feature>
<feature type="compositionally biased region" description="Basic and acidic residues" evidence="10">
    <location>
        <begin position="689"/>
        <end position="713"/>
    </location>
</feature>
<feature type="binding site" evidence="9">
    <location>
        <position position="67"/>
    </location>
    <ligand>
        <name>Ca(2+)</name>
        <dbReference type="ChEBI" id="CHEBI:29108"/>
    </ligand>
</feature>
<feature type="binding site" evidence="9">
    <location>
        <position position="69"/>
    </location>
    <ligand>
        <name>Ca(2+)</name>
        <dbReference type="ChEBI" id="CHEBI:29108"/>
    </ligand>
</feature>
<feature type="binding site" evidence="9">
    <location>
        <position position="71"/>
    </location>
    <ligand>
        <name>Ca(2+)</name>
        <dbReference type="ChEBI" id="CHEBI:29108"/>
    </ligand>
</feature>
<feature type="binding site" evidence="9">
    <location>
        <position position="73"/>
    </location>
    <ligand>
        <name>Ca(2+)</name>
        <dbReference type="ChEBI" id="CHEBI:29108"/>
    </ligand>
</feature>
<feature type="binding site" evidence="9">
    <location>
        <position position="78"/>
    </location>
    <ligand>
        <name>Ca(2+)</name>
        <dbReference type="ChEBI" id="CHEBI:29108"/>
    </ligand>
</feature>
<feature type="binding site" evidence="4">
    <location>
        <position position="1602"/>
    </location>
    <ligand>
        <name>Ca(2+)</name>
        <dbReference type="ChEBI" id="CHEBI:29108"/>
    </ligand>
</feature>
<feature type="binding site" evidence="4">
    <location>
        <position position="1605"/>
    </location>
    <ligand>
        <name>Ca(2+)</name>
        <dbReference type="ChEBI" id="CHEBI:29108"/>
    </ligand>
</feature>
<feature type="binding site" evidence="4">
    <location>
        <position position="1608"/>
    </location>
    <ligand>
        <name>Ca(2+)</name>
        <dbReference type="ChEBI" id="CHEBI:29108"/>
    </ligand>
</feature>
<feature type="modified residue" description="Phosphoserine" evidence="2">
    <location>
        <position position="110"/>
    </location>
</feature>
<feature type="modified residue" description="Phosphoserine" evidence="19">
    <location>
        <position position="211"/>
    </location>
</feature>
<feature type="modified residue" description="Phosphoserine" evidence="2">
    <location>
        <position position="231"/>
    </location>
</feature>
<feature type="modified residue" description="Phosphotyrosine" evidence="16">
    <location>
        <position position="554"/>
    </location>
</feature>
<feature type="modified residue" description="Phosphothreonine" evidence="2">
    <location>
        <position position="574"/>
    </location>
</feature>
<feature type="modified residue" description="Phosphothreonine" evidence="19">
    <location>
        <position position="836"/>
    </location>
</feature>
<feature type="modified residue" description="Phosphoserine" evidence="18 19">
    <location>
        <position position="838"/>
    </location>
</feature>
<feature type="modified residue" description="Phosphoserine" evidence="17 18 19">
    <location>
        <position position="843"/>
    </location>
</feature>
<feature type="modified residue" description="Phosphotyrosine" evidence="15 16 18">
    <location>
        <position position="922"/>
    </location>
</feature>
<feature type="splice variant" id="VSP_003896" description="In isoform 2." evidence="13">
    <original>DDLQLVIEVFQ</original>
    <variation>GLQLFEQKTLL</variation>
    <location>
        <begin position="1188"/>
        <end position="1198"/>
    </location>
</feature>
<feature type="splice variant" id="VSP_003897" description="In isoform 2." evidence="13">
    <location>
        <begin position="1199"/>
        <end position="1659"/>
    </location>
</feature>
<feature type="sequence conflict" description="In Ref. 2; AAD19748." evidence="14" ref="2">
    <original>KQ</original>
    <variation>NT</variation>
    <location>
        <begin position="452"/>
        <end position="453"/>
    </location>
</feature>
<feature type="sequence conflict" description="In Ref. 2; AAD19748." evidence="14" ref="2">
    <original>D</original>
    <variation>G</variation>
    <location>
        <position position="1162"/>
    </location>
</feature>
<dbReference type="EMBL" id="AK042449">
    <property type="protein sequence ID" value="BAC31264.1"/>
    <property type="status" value="ALT_INIT"/>
    <property type="molecule type" value="mRNA"/>
</dbReference>
<dbReference type="EMBL" id="AF132479">
    <property type="protein sequence ID" value="AAD19747.1"/>
    <property type="molecule type" value="mRNA"/>
</dbReference>
<dbReference type="EMBL" id="AF132480">
    <property type="protein sequence ID" value="AAD19748.1"/>
    <property type="molecule type" value="mRNA"/>
</dbReference>
<dbReference type="SMR" id="Q9Z0R6"/>
<dbReference type="FunCoup" id="Q9Z0R6">
    <property type="interactions" value="1973"/>
</dbReference>
<dbReference type="IntAct" id="Q9Z0R6">
    <property type="interactions" value="13"/>
</dbReference>
<dbReference type="STRING" id="10090.ENSMUSP00000052758"/>
<dbReference type="GlyGen" id="Q9Z0R6">
    <property type="glycosylation" value="1 site, 1 O-linked glycan (1 site)"/>
</dbReference>
<dbReference type="iPTMnet" id="Q9Z0R6"/>
<dbReference type="PhosphoSitePlus" id="Q9Z0R6"/>
<dbReference type="SwissPalm" id="Q9Z0R6"/>
<dbReference type="jPOST" id="Q9Z0R6"/>
<dbReference type="PaxDb" id="10090-ENSMUSP00000052758"/>
<dbReference type="PeptideAtlas" id="Q9Z0R6"/>
<dbReference type="ProteomicsDB" id="269019">
    <molecule id="Q9Z0R6-1"/>
</dbReference>
<dbReference type="ProteomicsDB" id="269020">
    <molecule id="Q9Z0R6-2"/>
</dbReference>
<dbReference type="Pumba" id="Q9Z0R6"/>
<dbReference type="UCSC" id="uc007mxy.1">
    <molecule id="Q9Z0R6-2"/>
    <property type="organism name" value="mouse"/>
</dbReference>
<dbReference type="AGR" id="MGI:1338049"/>
<dbReference type="MGI" id="MGI:1338049">
    <property type="gene designation" value="Itsn2"/>
</dbReference>
<dbReference type="eggNOG" id="KOG1029">
    <property type="taxonomic scope" value="Eukaryota"/>
</dbReference>
<dbReference type="eggNOG" id="KOG4305">
    <property type="taxonomic scope" value="Eukaryota"/>
</dbReference>
<dbReference type="InParanoid" id="Q9Z0R6"/>
<dbReference type="Reactome" id="R-MMU-8856825">
    <property type="pathway name" value="Cargo recognition for clathrin-mediated endocytosis"/>
</dbReference>
<dbReference type="Reactome" id="R-MMU-8856828">
    <property type="pathway name" value="Clathrin-mediated endocytosis"/>
</dbReference>
<dbReference type="Reactome" id="R-MMU-9013420">
    <property type="pathway name" value="RHOU GTPase cycle"/>
</dbReference>
<dbReference type="CD-CODE" id="CE726F99">
    <property type="entry name" value="Postsynaptic density"/>
</dbReference>
<dbReference type="ChiTaRS" id="Itsn2">
    <property type="organism name" value="mouse"/>
</dbReference>
<dbReference type="PRO" id="PR:Q9Z0R6"/>
<dbReference type="Proteomes" id="UP000000589">
    <property type="component" value="Unplaced"/>
</dbReference>
<dbReference type="RNAct" id="Q9Z0R6">
    <property type="molecule type" value="protein"/>
</dbReference>
<dbReference type="GO" id="GO:0005829">
    <property type="term" value="C:cytosol"/>
    <property type="evidence" value="ECO:0000314"/>
    <property type="project" value="MGI"/>
</dbReference>
<dbReference type="GO" id="GO:0005509">
    <property type="term" value="F:calcium ion binding"/>
    <property type="evidence" value="ECO:0007669"/>
    <property type="project" value="InterPro"/>
</dbReference>
<dbReference type="GO" id="GO:0005085">
    <property type="term" value="F:guanyl-nucleotide exchange factor activity"/>
    <property type="evidence" value="ECO:0007669"/>
    <property type="project" value="InterPro"/>
</dbReference>
<dbReference type="GO" id="GO:0030154">
    <property type="term" value="P:cell differentiation"/>
    <property type="evidence" value="ECO:0007669"/>
    <property type="project" value="UniProtKB-KW"/>
</dbReference>
<dbReference type="GO" id="GO:0007267">
    <property type="term" value="P:cell-cell signaling"/>
    <property type="evidence" value="ECO:0000315"/>
    <property type="project" value="MGI"/>
</dbReference>
<dbReference type="GO" id="GO:0006897">
    <property type="term" value="P:endocytosis"/>
    <property type="evidence" value="ECO:0000315"/>
    <property type="project" value="MGI"/>
</dbReference>
<dbReference type="CDD" id="cd08375">
    <property type="entry name" value="C2_Intersectin"/>
    <property type="match status" value="1"/>
</dbReference>
<dbReference type="CDD" id="cd00052">
    <property type="entry name" value="EH"/>
    <property type="match status" value="2"/>
</dbReference>
<dbReference type="CDD" id="cd13264">
    <property type="entry name" value="PH_ITSN"/>
    <property type="match status" value="1"/>
</dbReference>
<dbReference type="CDD" id="cd00160">
    <property type="entry name" value="RhoGEF"/>
    <property type="match status" value="1"/>
</dbReference>
<dbReference type="CDD" id="cd11988">
    <property type="entry name" value="SH3_Intersectin2_1"/>
    <property type="match status" value="1"/>
</dbReference>
<dbReference type="CDD" id="cd11990">
    <property type="entry name" value="SH3_Intersectin2_2"/>
    <property type="match status" value="1"/>
</dbReference>
<dbReference type="CDD" id="cd11992">
    <property type="entry name" value="SH3_Intersectin2_3"/>
    <property type="match status" value="1"/>
</dbReference>
<dbReference type="CDD" id="cd11994">
    <property type="entry name" value="SH3_Intersectin2_4"/>
    <property type="match status" value="1"/>
</dbReference>
<dbReference type="CDD" id="cd11996">
    <property type="entry name" value="SH3_Intersectin2_5"/>
    <property type="match status" value="1"/>
</dbReference>
<dbReference type="FunFam" id="1.20.900.10:FF:000011">
    <property type="entry name" value="Intersectin 1"/>
    <property type="match status" value="1"/>
</dbReference>
<dbReference type="FunFam" id="2.30.29.30:FF:000069">
    <property type="entry name" value="Intersectin 1"/>
    <property type="match status" value="1"/>
</dbReference>
<dbReference type="FunFam" id="2.30.30.40:FF:000024">
    <property type="entry name" value="Intersectin 1"/>
    <property type="match status" value="1"/>
</dbReference>
<dbReference type="FunFam" id="2.30.30.40:FF:000041">
    <property type="entry name" value="Intersectin 1"/>
    <property type="match status" value="1"/>
</dbReference>
<dbReference type="FunFam" id="2.60.40.150:FF:000029">
    <property type="entry name" value="Intersectin 1"/>
    <property type="match status" value="1"/>
</dbReference>
<dbReference type="FunFam" id="1.10.238.10:FF:000055">
    <property type="entry name" value="Intersectin-1 isoform 1"/>
    <property type="match status" value="1"/>
</dbReference>
<dbReference type="FunFam" id="1.10.238.10:FF:000046">
    <property type="entry name" value="intersectin-1 isoform X2"/>
    <property type="match status" value="1"/>
</dbReference>
<dbReference type="Gene3D" id="2.60.40.150">
    <property type="entry name" value="C2 domain"/>
    <property type="match status" value="1"/>
</dbReference>
<dbReference type="Gene3D" id="1.20.900.10">
    <property type="entry name" value="Dbl homology (DH) domain"/>
    <property type="match status" value="1"/>
</dbReference>
<dbReference type="Gene3D" id="1.10.238.10">
    <property type="entry name" value="EF-hand"/>
    <property type="match status" value="2"/>
</dbReference>
<dbReference type="Gene3D" id="2.30.29.30">
    <property type="entry name" value="Pleckstrin-homology domain (PH domain)/Phosphotyrosine-binding domain (PTB)"/>
    <property type="match status" value="1"/>
</dbReference>
<dbReference type="Gene3D" id="2.30.30.40">
    <property type="entry name" value="SH3 Domains"/>
    <property type="match status" value="5"/>
</dbReference>
<dbReference type="InterPro" id="IPR000008">
    <property type="entry name" value="C2_dom"/>
</dbReference>
<dbReference type="InterPro" id="IPR035892">
    <property type="entry name" value="C2_domain_sf"/>
</dbReference>
<dbReference type="InterPro" id="IPR035899">
    <property type="entry name" value="DBL_dom_sf"/>
</dbReference>
<dbReference type="InterPro" id="IPR000219">
    <property type="entry name" value="DH_dom"/>
</dbReference>
<dbReference type="InterPro" id="IPR011992">
    <property type="entry name" value="EF-hand-dom_pair"/>
</dbReference>
<dbReference type="InterPro" id="IPR018247">
    <property type="entry name" value="EF_Hand_1_Ca_BS"/>
</dbReference>
<dbReference type="InterPro" id="IPR002048">
    <property type="entry name" value="EF_hand_dom"/>
</dbReference>
<dbReference type="InterPro" id="IPR000261">
    <property type="entry name" value="EH_dom"/>
</dbReference>
<dbReference type="InterPro" id="IPR051480">
    <property type="entry name" value="Endocytic_GEF_Adapter"/>
</dbReference>
<dbReference type="InterPro" id="IPR035737">
    <property type="entry name" value="Intersectin-2_SH3_1"/>
</dbReference>
<dbReference type="InterPro" id="IPR035738">
    <property type="entry name" value="Intersectin-2_SH3_2"/>
</dbReference>
<dbReference type="InterPro" id="IPR035739">
    <property type="entry name" value="Intersectin-2_SH3_3"/>
</dbReference>
<dbReference type="InterPro" id="IPR035740">
    <property type="entry name" value="Intersectin-2_SH3_4"/>
</dbReference>
<dbReference type="InterPro" id="IPR035741">
    <property type="entry name" value="Intersectin-2_SH3_5"/>
</dbReference>
<dbReference type="InterPro" id="IPR011993">
    <property type="entry name" value="PH-like_dom_sf"/>
</dbReference>
<dbReference type="InterPro" id="IPR001849">
    <property type="entry name" value="PH_domain"/>
</dbReference>
<dbReference type="InterPro" id="IPR036028">
    <property type="entry name" value="SH3-like_dom_sf"/>
</dbReference>
<dbReference type="InterPro" id="IPR001452">
    <property type="entry name" value="SH3_domain"/>
</dbReference>
<dbReference type="PANTHER" id="PTHR46006:SF6">
    <property type="entry name" value="INTERSECTIN-2 ISOFORM X1"/>
    <property type="match status" value="1"/>
</dbReference>
<dbReference type="PANTHER" id="PTHR46006">
    <property type="entry name" value="RHO GUANINE NUCLEOTIDE EXCHANGE FACTOR AT 64C, ISOFORM A"/>
    <property type="match status" value="1"/>
</dbReference>
<dbReference type="Pfam" id="PF00168">
    <property type="entry name" value="C2"/>
    <property type="match status" value="1"/>
</dbReference>
<dbReference type="Pfam" id="PF12763">
    <property type="entry name" value="EH"/>
    <property type="match status" value="2"/>
</dbReference>
<dbReference type="Pfam" id="PF16652">
    <property type="entry name" value="PH_13"/>
    <property type="match status" value="1"/>
</dbReference>
<dbReference type="Pfam" id="PF00621">
    <property type="entry name" value="RhoGEF"/>
    <property type="match status" value="1"/>
</dbReference>
<dbReference type="Pfam" id="PF00018">
    <property type="entry name" value="SH3_1"/>
    <property type="match status" value="2"/>
</dbReference>
<dbReference type="Pfam" id="PF07653">
    <property type="entry name" value="SH3_2"/>
    <property type="match status" value="1"/>
</dbReference>
<dbReference type="Pfam" id="PF14604">
    <property type="entry name" value="SH3_9"/>
    <property type="match status" value="2"/>
</dbReference>
<dbReference type="PRINTS" id="PR00499">
    <property type="entry name" value="P67PHOX"/>
</dbReference>
<dbReference type="PRINTS" id="PR00452">
    <property type="entry name" value="SH3DOMAIN"/>
</dbReference>
<dbReference type="SMART" id="SM00239">
    <property type="entry name" value="C2"/>
    <property type="match status" value="1"/>
</dbReference>
<dbReference type="SMART" id="SM00054">
    <property type="entry name" value="EFh"/>
    <property type="match status" value="2"/>
</dbReference>
<dbReference type="SMART" id="SM00027">
    <property type="entry name" value="EH"/>
    <property type="match status" value="2"/>
</dbReference>
<dbReference type="SMART" id="SM00233">
    <property type="entry name" value="PH"/>
    <property type="match status" value="1"/>
</dbReference>
<dbReference type="SMART" id="SM00325">
    <property type="entry name" value="RhoGEF"/>
    <property type="match status" value="1"/>
</dbReference>
<dbReference type="SMART" id="SM00326">
    <property type="entry name" value="SH3"/>
    <property type="match status" value="5"/>
</dbReference>
<dbReference type="SUPFAM" id="SSF49562">
    <property type="entry name" value="C2 domain (Calcium/lipid-binding domain, CaLB)"/>
    <property type="match status" value="1"/>
</dbReference>
<dbReference type="SUPFAM" id="SSF48065">
    <property type="entry name" value="DBL homology domain (DH-domain)"/>
    <property type="match status" value="1"/>
</dbReference>
<dbReference type="SUPFAM" id="SSF47473">
    <property type="entry name" value="EF-hand"/>
    <property type="match status" value="2"/>
</dbReference>
<dbReference type="SUPFAM" id="SSF50729">
    <property type="entry name" value="PH domain-like"/>
    <property type="match status" value="1"/>
</dbReference>
<dbReference type="SUPFAM" id="SSF50044">
    <property type="entry name" value="SH3-domain"/>
    <property type="match status" value="5"/>
</dbReference>
<dbReference type="PROSITE" id="PS50004">
    <property type="entry name" value="C2"/>
    <property type="match status" value="1"/>
</dbReference>
<dbReference type="PROSITE" id="PS50010">
    <property type="entry name" value="DH_2"/>
    <property type="match status" value="1"/>
</dbReference>
<dbReference type="PROSITE" id="PS00018">
    <property type="entry name" value="EF_HAND_1"/>
    <property type="match status" value="1"/>
</dbReference>
<dbReference type="PROSITE" id="PS50222">
    <property type="entry name" value="EF_HAND_2"/>
    <property type="match status" value="2"/>
</dbReference>
<dbReference type="PROSITE" id="PS50031">
    <property type="entry name" value="EH"/>
    <property type="match status" value="2"/>
</dbReference>
<dbReference type="PROSITE" id="PS50003">
    <property type="entry name" value="PH_DOMAIN"/>
    <property type="match status" value="1"/>
</dbReference>
<dbReference type="PROSITE" id="PS50002">
    <property type="entry name" value="SH3"/>
    <property type="match status" value="5"/>
</dbReference>
<comment type="function">
    <text evidence="2">Adapter protein that may provide indirect link between the endocytic membrane traffic and the actin assembly machinery. May regulate the formation of clathrin-coated vesicles (CCPs). Seems to be involved in CCPs maturation including invagination or budding. Involved in endocytosis of integrin beta-1 (ITGB1) and transferrin receptor (TFR). Plays a role in dendrite formation by melanocytes.</text>
</comment>
<comment type="cofactor">
    <cofactor evidence="4">
        <name>Ca(2+)</name>
        <dbReference type="ChEBI" id="CHEBI:29108"/>
    </cofactor>
</comment>
<comment type="subunit">
    <text evidence="1 11 12">Belongs to a complex that may contain multimers of ITSN1, ITSN2 and EPS15, and different partners according to the step in the endocytic process. Interacts with ADAM15. Interacts with FASLG (By similarity). Interacts with ANKRD54. Interacts with FCHO2.</text>
</comment>
<comment type="subcellular location">
    <subcellularLocation>
        <location evidence="1">Cytoplasm</location>
    </subcellularLocation>
</comment>
<comment type="alternative products">
    <event type="alternative splicing"/>
    <isoform>
        <id>Q9Z0R6-1</id>
        <name>1</name>
        <name>Ese2L</name>
        <name>Long</name>
        <sequence type="displayed"/>
    </isoform>
    <isoform>
        <id>Q9Z0R6-2</id>
        <name>2</name>
        <name>Ese2</name>
        <name>Short</name>
        <sequence type="described" ref="VSP_003896 VSP_003897"/>
    </isoform>
</comment>
<comment type="tissue specificity">
    <text>Widely expressed in adult tissues.</text>
</comment>
<comment type="developmental stage">
    <text>Widely distributed throughout the adult forebrain. Prominent expression was observed in the neocortex, the piriform cortex, the pyramidal cell layers of hippocampus, the dentate gyrus, in several nuclei of the thalamus and hypothalamus and in the amygdala.</text>
</comment>
<comment type="caution">
    <text evidence="14">It is uncertain whether Met-1 or Met-2 is the initiator.</text>
</comment>
<comment type="sequence caution" evidence="14">
    <conflict type="erroneous initiation">
        <sequence resource="EMBL-CDS" id="BAC31264"/>
    </conflict>
    <text>Truncated N-terminus.</text>
</comment>
<organism>
    <name type="scientific">Mus musculus</name>
    <name type="common">Mouse</name>
    <dbReference type="NCBI Taxonomy" id="10090"/>
    <lineage>
        <taxon>Eukaryota</taxon>
        <taxon>Metazoa</taxon>
        <taxon>Chordata</taxon>
        <taxon>Craniata</taxon>
        <taxon>Vertebrata</taxon>
        <taxon>Euteleostomi</taxon>
        <taxon>Mammalia</taxon>
        <taxon>Eutheria</taxon>
        <taxon>Euarchontoglires</taxon>
        <taxon>Glires</taxon>
        <taxon>Rodentia</taxon>
        <taxon>Myomorpha</taxon>
        <taxon>Muroidea</taxon>
        <taxon>Muridae</taxon>
        <taxon>Murinae</taxon>
        <taxon>Mus</taxon>
        <taxon>Mus</taxon>
    </lineage>
</organism>
<gene>
    <name type="primary">Itsn2</name>
    <name type="synonym">Ese2</name>
    <name type="synonym">Sh3d1B</name>
</gene>
<name>ITSN2_MOUSE</name>
<proteinExistence type="evidence at protein level"/>
<evidence type="ECO:0000250" key="1"/>
<evidence type="ECO:0000250" key="2">
    <source>
        <dbReference type="UniProtKB" id="Q9NZM3"/>
    </source>
</evidence>
<evidence type="ECO:0000255" key="3"/>
<evidence type="ECO:0000255" key="4">
    <source>
        <dbReference type="PROSITE-ProRule" id="PRU00041"/>
    </source>
</evidence>
<evidence type="ECO:0000255" key="5">
    <source>
        <dbReference type="PROSITE-ProRule" id="PRU00062"/>
    </source>
</evidence>
<evidence type="ECO:0000255" key="6">
    <source>
        <dbReference type="PROSITE-ProRule" id="PRU00077"/>
    </source>
</evidence>
<evidence type="ECO:0000255" key="7">
    <source>
        <dbReference type="PROSITE-ProRule" id="PRU00145"/>
    </source>
</evidence>
<evidence type="ECO:0000255" key="8">
    <source>
        <dbReference type="PROSITE-ProRule" id="PRU00192"/>
    </source>
</evidence>
<evidence type="ECO:0000255" key="9">
    <source>
        <dbReference type="PROSITE-ProRule" id="PRU00448"/>
    </source>
</evidence>
<evidence type="ECO:0000256" key="10">
    <source>
        <dbReference type="SAM" id="MobiDB-lite"/>
    </source>
</evidence>
<evidence type="ECO:0000269" key="11">
    <source>
    </source>
</evidence>
<evidence type="ECO:0000269" key="12">
    <source>
    </source>
</evidence>
<evidence type="ECO:0000303" key="13">
    <source>
    </source>
</evidence>
<evidence type="ECO:0000305" key="14"/>
<evidence type="ECO:0007744" key="15">
    <source>
    </source>
</evidence>
<evidence type="ECO:0007744" key="16">
    <source>
    </source>
</evidence>
<evidence type="ECO:0007744" key="17">
    <source>
    </source>
</evidence>
<evidence type="ECO:0007744" key="18">
    <source>
    </source>
</evidence>
<evidence type="ECO:0007744" key="19">
    <source>
    </source>
</evidence>
<protein>
    <recommendedName>
        <fullName>Intersectin-2</fullName>
    </recommendedName>
    <alternativeName>
        <fullName>EH domain and SH3 domain regulator of endocytosis 2</fullName>
        <shortName>EH and SH3 domains protein 2</shortName>
    </alternativeName>
    <alternativeName>
        <fullName>SH3 domain-containing protein 1B</fullName>
    </alternativeName>
</protein>
<accession>Q9Z0R6</accession>
<accession>Q8C9C3</accession>
<accession>Q9Z0R5</accession>
<sequence length="1659" mass="188908">MMAQFPTAMNGGPNMWAITSEERTKHDKQFDNLKPSGGYITGDQARTFFLQSGLPAPVLAEIWALSDLNKDGKMDQQEFSIAMKLIKLKLQGQQLPVVLPPIMKQPPMFSPLISARFGMGSMPNLSIHQPLPPVAPIATPLSSATSGTSIPPLMMPAPLVPSVSTSSLPNGTASLIQPLSIPYSSSTLPHASSYSLMMGGFGGASIQKAQSLIDLGSSSSTSSTASLSGNSPKTGTSEWAVPQPSRLKYRQKFNSLDKGMSGYLSGFQARNALLQSNLSQTQLATIWTLADIDGDGQLKAEEFILAMHLTDMAKAGQPLPLTLPPELVPPSFRGGKQVDSVNGTLPSYQKTQEEEPQKKLPVTFEDKRKANYERGNMELEKRRQVLMEQQQREAERKAQKEKEEWERKQRELQEQEWKKQLELEKRLEKQRELERQREEERRKEIERREAAKQELERQRRLEWERLRRQELLSQKTREQEDIVRLSSRKKSLHLELEAVNGKHQQISGRLQDVQIRKQTQKTELEVLDKQCDLEIMEIKQLQQELKEYQNKLIYLVPEKQLLNERIKNMQLSNTPDSGISLLHKKSSEKEELCQRLKEQLDALEKETASKLSEMDSFNNQLKELRESYNTQQLALEQLHKIKRDKLKEIERKRLEQIQKKKLEDEAARKAKQGKENLWRESIRKEEEEKQKRLQEEKSQDKTQEEERKAEAKQSETASALVNYRALYPFEARNHDEMSFSSGDIIQVDEKTVGEPGWLYGSFQGKFGWFPCNYVEKVLSSEKALSPKKALLPPTVSLSATSTSSQPPASVTDYHNVSFSNLTVNTTWQQKSAFTRTVSPGSVSPIHGQGQAVENLKAQALCSWTAKKENHLNFSKHDVITVLEQQENWWFGEVHGGRGWFPKSYVKLIPGNEVQRGEPEALYAAVTKKPTSTAYPVTSTAYPVGEDYIALYSYSSVEPGDLTFTEGEEILVTQKDGEWWTGSIGERTGIFPSNYVRPKDQENFGNASKSGASNKKPEIAQVTSAYAASGTEQLSLAPGQLILILKKNTSGWWQGELQARGKKRQKGWFPASHVKLLGPSSERTMPTFHAVCQVIAMYDYMANNEDELNFSKGQLINVMNKDDPDWWQGETNGLTGLFPSNYVKMTTDSDPSQQWCADLQALDTMQPTERKRQGYIHELIQTEERYMDDDLQLVIEVFQKRMAEEGFLTEADMALIFVNWKELIMSNTKLLRALRVRKKTGGEKMPVQMIGDILAAELSHMQAYIRFCSCQLNGATLLQQKTDEDTDFKEFLKKLASDPRCKGMPLSSFLLKPMQRITRYPLLIRSILENTPQSHVDHSSLKLALERAEELCSQVNEGVREKENSDRLEWIQAHVQCEGLAEQLIFNSLTNCLGPRKLLHSGKLYKTKSNKELHAFLFNDFLLLTYLVRQFAAASGHEKLFNSKSSAQFRMYKTPIFLNEVLVKLPTDPSGDEPVFHISHIDRVYTLRTDNINERTAWVQKIKGASEQYIDTEKKKREKAYQARSQKTSGIGRLMVHVIEATELKACKPNGKSNPYCEVSMGSQSYTTRTLQDTLNPKWNFNCQFFIKDLYQDVLCLTMFDRDQFSPDDFLGRTEVPVAKIRTEQESKGPTTRRLLLHEVPTGEVWVRFDLQLFEQKTLL</sequence>
<reference key="1">
    <citation type="journal article" date="2005" name="Science">
        <title>The transcriptional landscape of the mammalian genome.</title>
        <authorList>
            <person name="Carninci P."/>
            <person name="Kasukawa T."/>
            <person name="Katayama S."/>
            <person name="Gough J."/>
            <person name="Frith M.C."/>
            <person name="Maeda N."/>
            <person name="Oyama R."/>
            <person name="Ravasi T."/>
            <person name="Lenhard B."/>
            <person name="Wells C."/>
            <person name="Kodzius R."/>
            <person name="Shimokawa K."/>
            <person name="Bajic V.B."/>
            <person name="Brenner S.E."/>
            <person name="Batalov S."/>
            <person name="Forrest A.R."/>
            <person name="Zavolan M."/>
            <person name="Davis M.J."/>
            <person name="Wilming L.G."/>
            <person name="Aidinis V."/>
            <person name="Allen J.E."/>
            <person name="Ambesi-Impiombato A."/>
            <person name="Apweiler R."/>
            <person name="Aturaliya R.N."/>
            <person name="Bailey T.L."/>
            <person name="Bansal M."/>
            <person name="Baxter L."/>
            <person name="Beisel K.W."/>
            <person name="Bersano T."/>
            <person name="Bono H."/>
            <person name="Chalk A.M."/>
            <person name="Chiu K.P."/>
            <person name="Choudhary V."/>
            <person name="Christoffels A."/>
            <person name="Clutterbuck D.R."/>
            <person name="Crowe M.L."/>
            <person name="Dalla E."/>
            <person name="Dalrymple B.P."/>
            <person name="de Bono B."/>
            <person name="Della Gatta G."/>
            <person name="di Bernardo D."/>
            <person name="Down T."/>
            <person name="Engstrom P."/>
            <person name="Fagiolini M."/>
            <person name="Faulkner G."/>
            <person name="Fletcher C.F."/>
            <person name="Fukushima T."/>
            <person name="Furuno M."/>
            <person name="Futaki S."/>
            <person name="Gariboldi M."/>
            <person name="Georgii-Hemming P."/>
            <person name="Gingeras T.R."/>
            <person name="Gojobori T."/>
            <person name="Green R.E."/>
            <person name="Gustincich S."/>
            <person name="Harbers M."/>
            <person name="Hayashi Y."/>
            <person name="Hensch T.K."/>
            <person name="Hirokawa N."/>
            <person name="Hill D."/>
            <person name="Huminiecki L."/>
            <person name="Iacono M."/>
            <person name="Ikeo K."/>
            <person name="Iwama A."/>
            <person name="Ishikawa T."/>
            <person name="Jakt M."/>
            <person name="Kanapin A."/>
            <person name="Katoh M."/>
            <person name="Kawasawa Y."/>
            <person name="Kelso J."/>
            <person name="Kitamura H."/>
            <person name="Kitano H."/>
            <person name="Kollias G."/>
            <person name="Krishnan S.P."/>
            <person name="Kruger A."/>
            <person name="Kummerfeld S.K."/>
            <person name="Kurochkin I.V."/>
            <person name="Lareau L.F."/>
            <person name="Lazarevic D."/>
            <person name="Lipovich L."/>
            <person name="Liu J."/>
            <person name="Liuni S."/>
            <person name="McWilliam S."/>
            <person name="Madan Babu M."/>
            <person name="Madera M."/>
            <person name="Marchionni L."/>
            <person name="Matsuda H."/>
            <person name="Matsuzawa S."/>
            <person name="Miki H."/>
            <person name="Mignone F."/>
            <person name="Miyake S."/>
            <person name="Morris K."/>
            <person name="Mottagui-Tabar S."/>
            <person name="Mulder N."/>
            <person name="Nakano N."/>
            <person name="Nakauchi H."/>
            <person name="Ng P."/>
            <person name="Nilsson R."/>
            <person name="Nishiguchi S."/>
            <person name="Nishikawa S."/>
            <person name="Nori F."/>
            <person name="Ohara O."/>
            <person name="Okazaki Y."/>
            <person name="Orlando V."/>
            <person name="Pang K.C."/>
            <person name="Pavan W.J."/>
            <person name="Pavesi G."/>
            <person name="Pesole G."/>
            <person name="Petrovsky N."/>
            <person name="Piazza S."/>
            <person name="Reed J."/>
            <person name="Reid J.F."/>
            <person name="Ring B.Z."/>
            <person name="Ringwald M."/>
            <person name="Rost B."/>
            <person name="Ruan Y."/>
            <person name="Salzberg S.L."/>
            <person name="Sandelin A."/>
            <person name="Schneider C."/>
            <person name="Schoenbach C."/>
            <person name="Sekiguchi K."/>
            <person name="Semple C.A."/>
            <person name="Seno S."/>
            <person name="Sessa L."/>
            <person name="Sheng Y."/>
            <person name="Shibata Y."/>
            <person name="Shimada H."/>
            <person name="Shimada K."/>
            <person name="Silva D."/>
            <person name="Sinclair B."/>
            <person name="Sperling S."/>
            <person name="Stupka E."/>
            <person name="Sugiura K."/>
            <person name="Sultana R."/>
            <person name="Takenaka Y."/>
            <person name="Taki K."/>
            <person name="Tammoja K."/>
            <person name="Tan S.L."/>
            <person name="Tang S."/>
            <person name="Taylor M.S."/>
            <person name="Tegner J."/>
            <person name="Teichmann S.A."/>
            <person name="Ueda H.R."/>
            <person name="van Nimwegen E."/>
            <person name="Verardo R."/>
            <person name="Wei C.L."/>
            <person name="Yagi K."/>
            <person name="Yamanishi H."/>
            <person name="Zabarovsky E."/>
            <person name="Zhu S."/>
            <person name="Zimmer A."/>
            <person name="Hide W."/>
            <person name="Bult C."/>
            <person name="Grimmond S.M."/>
            <person name="Teasdale R.D."/>
            <person name="Liu E.T."/>
            <person name="Brusic V."/>
            <person name="Quackenbush J."/>
            <person name="Wahlestedt C."/>
            <person name="Mattick J.S."/>
            <person name="Hume D.A."/>
            <person name="Kai C."/>
            <person name="Sasaki D."/>
            <person name="Tomaru Y."/>
            <person name="Fukuda S."/>
            <person name="Kanamori-Katayama M."/>
            <person name="Suzuki M."/>
            <person name="Aoki J."/>
            <person name="Arakawa T."/>
            <person name="Iida J."/>
            <person name="Imamura K."/>
            <person name="Itoh M."/>
            <person name="Kato T."/>
            <person name="Kawaji H."/>
            <person name="Kawagashira N."/>
            <person name="Kawashima T."/>
            <person name="Kojima M."/>
            <person name="Kondo S."/>
            <person name="Konno H."/>
            <person name="Nakano K."/>
            <person name="Ninomiya N."/>
            <person name="Nishio T."/>
            <person name="Okada M."/>
            <person name="Plessy C."/>
            <person name="Shibata K."/>
            <person name="Shiraki T."/>
            <person name="Suzuki S."/>
            <person name="Tagami M."/>
            <person name="Waki K."/>
            <person name="Watahiki A."/>
            <person name="Okamura-Oho Y."/>
            <person name="Suzuki H."/>
            <person name="Kawai J."/>
            <person name="Hayashizaki Y."/>
        </authorList>
    </citation>
    <scope>NUCLEOTIDE SEQUENCE [LARGE SCALE MRNA] OF 1-441 (ISOFORM 1/2)</scope>
    <source>
        <strain>C57BL/6J</strain>
        <tissue>Thymus</tissue>
    </source>
</reference>
<reference key="2">
    <citation type="journal article" date="1999" name="EMBO J.">
        <title>The EH and SH3 domain Ese proteins regulate endocytosis by linking to dynamin and Eps15.</title>
        <authorList>
            <person name="Sengar A.S."/>
            <person name="Wang W."/>
            <person name="Bishay J."/>
            <person name="Cohen S."/>
            <person name="Egan S.E."/>
        </authorList>
    </citation>
    <scope>NUCLEOTIDE SEQUENCE [MRNA] OF 2-1659 (ISOFORMS 1 AND 2)</scope>
</reference>
<reference key="3">
    <citation type="journal article" date="2005" name="Nat. Biotechnol.">
        <title>Immunoaffinity profiling of tyrosine phosphorylation in cancer cells.</title>
        <authorList>
            <person name="Rush J."/>
            <person name="Moritz A."/>
            <person name="Lee K.A."/>
            <person name="Guo A."/>
            <person name="Goss V.L."/>
            <person name="Spek E.J."/>
            <person name="Zhang H."/>
            <person name="Zha X.-M."/>
            <person name="Polakiewicz R.D."/>
            <person name="Comb M.J."/>
        </authorList>
    </citation>
    <scope>PHOSPHORYLATION [LARGE SCALE ANALYSIS] AT TYR-922</scope>
    <scope>IDENTIFICATION BY MASS SPECTROMETRY [LARGE SCALE ANALYSIS]</scope>
</reference>
<reference key="4">
    <citation type="journal article" date="2007" name="J. Immunol.">
        <title>Quantitative time-resolved phosphoproteomic analysis of mast cell signaling.</title>
        <authorList>
            <person name="Cao L."/>
            <person name="Yu K."/>
            <person name="Banh C."/>
            <person name="Nguyen V."/>
            <person name="Ritz A."/>
            <person name="Raphael B.J."/>
            <person name="Kawakami Y."/>
            <person name="Kawakami T."/>
            <person name="Salomon A.R."/>
        </authorList>
    </citation>
    <scope>PHOSPHORYLATION [LARGE SCALE ANALYSIS] AT TYR-554 AND TYR-922</scope>
    <scope>IDENTIFICATION BY MASS SPECTROMETRY [LARGE SCALE ANALYSIS]</scope>
    <source>
        <tissue>Mast cell</tissue>
    </source>
</reference>
<reference key="5">
    <citation type="journal article" date="2007" name="Proc. Natl. Acad. Sci. U.S.A.">
        <title>Large-scale phosphorylation analysis of mouse liver.</title>
        <authorList>
            <person name="Villen J."/>
            <person name="Beausoleil S.A."/>
            <person name="Gerber S.A."/>
            <person name="Gygi S.P."/>
        </authorList>
    </citation>
    <scope>IDENTIFICATION BY MASS SPECTROMETRY [LARGE SCALE ANALYSIS]</scope>
    <source>
        <tissue>Liver</tissue>
    </source>
</reference>
<reference key="6">
    <citation type="journal article" date="2009" name="Blood">
        <title>Liar, a novel Lyn-binding nuclear/cytoplasmic shuttling protein that influences erythropoietin-induced differentiation.</title>
        <authorList>
            <person name="Samuels A.L."/>
            <person name="Klinken S.P."/>
            <person name="Ingley E."/>
        </authorList>
    </citation>
    <scope>INTERACTION WITH ANKRD54</scope>
</reference>
<reference key="7">
    <citation type="journal article" date="2009" name="Immunity">
        <title>The phagosomal proteome in interferon-gamma-activated macrophages.</title>
        <authorList>
            <person name="Trost M."/>
            <person name="English L."/>
            <person name="Lemieux S."/>
            <person name="Courcelles M."/>
            <person name="Desjardins M."/>
            <person name="Thibault P."/>
        </authorList>
    </citation>
    <scope>PHOSPHORYLATION [LARGE SCALE ANALYSIS] AT SER-838; SER-843 AND TYR-922</scope>
    <scope>IDENTIFICATION BY MASS SPECTROMETRY [LARGE SCALE ANALYSIS]</scope>
</reference>
<reference key="8">
    <citation type="journal article" date="2009" name="Mol. Cell. Proteomics">
        <title>Large scale localization of protein phosphorylation by use of electron capture dissociation mass spectrometry.</title>
        <authorList>
            <person name="Sweet S.M."/>
            <person name="Bailey C.M."/>
            <person name="Cunningham D.L."/>
            <person name="Heath J.K."/>
            <person name="Cooper H.J."/>
        </authorList>
    </citation>
    <scope>PHOSPHORYLATION [LARGE SCALE ANALYSIS] AT SER-843</scope>
    <scope>IDENTIFICATION BY MASS SPECTROMETRY [LARGE SCALE ANALYSIS]</scope>
    <source>
        <tissue>Embryonic fibroblast</tissue>
    </source>
</reference>
<reference key="9">
    <citation type="journal article" date="2010" name="Cell">
        <title>A tissue-specific atlas of mouse protein phosphorylation and expression.</title>
        <authorList>
            <person name="Huttlin E.L."/>
            <person name="Jedrychowski M.P."/>
            <person name="Elias J.E."/>
            <person name="Goswami T."/>
            <person name="Rad R."/>
            <person name="Beausoleil S.A."/>
            <person name="Villen J."/>
            <person name="Haas W."/>
            <person name="Sowa M.E."/>
            <person name="Gygi S.P."/>
        </authorList>
    </citation>
    <scope>PHOSPHORYLATION [LARGE SCALE ANALYSIS] AT SER-211; THR-836; SER-838 AND SER-843</scope>
    <scope>IDENTIFICATION BY MASS SPECTROMETRY [LARGE SCALE ANALYSIS]</scope>
    <source>
        <tissue>Heart</tissue>
        <tissue>Kidney</tissue>
        <tissue>Lung</tissue>
        <tissue>Spleen</tissue>
        <tissue>Testis</tissue>
    </source>
</reference>
<reference key="10">
    <citation type="journal article" date="2010" name="Science">
        <title>FCHo proteins are nucleators of clathrin-mediated endocytosis.</title>
        <authorList>
            <person name="Henne W.M."/>
            <person name="Boucrot E."/>
            <person name="Meinecke M."/>
            <person name="Evergren E."/>
            <person name="Vallis Y."/>
            <person name="Mittal R."/>
            <person name="McMahon H.T."/>
        </authorList>
    </citation>
    <scope>INTERACTION WITH FCHO2</scope>
</reference>